<reference key="1">
    <citation type="journal article" date="2002" name="J. Bacteriol.">
        <title>Whole-genome comparison of Mycobacterium tuberculosis clinical and laboratory strains.</title>
        <authorList>
            <person name="Fleischmann R.D."/>
            <person name="Alland D."/>
            <person name="Eisen J.A."/>
            <person name="Carpenter L."/>
            <person name="White O."/>
            <person name="Peterson J.D."/>
            <person name="DeBoy R.T."/>
            <person name="Dodson R.J."/>
            <person name="Gwinn M.L."/>
            <person name="Haft D.H."/>
            <person name="Hickey E.K."/>
            <person name="Kolonay J.F."/>
            <person name="Nelson W.C."/>
            <person name="Umayam L.A."/>
            <person name="Ermolaeva M.D."/>
            <person name="Salzberg S.L."/>
            <person name="Delcher A."/>
            <person name="Utterback T.R."/>
            <person name="Weidman J.F."/>
            <person name="Khouri H.M."/>
            <person name="Gill J."/>
            <person name="Mikula A."/>
            <person name="Bishai W."/>
            <person name="Jacobs W.R. Jr."/>
            <person name="Venter J.C."/>
            <person name="Fraser C.M."/>
        </authorList>
    </citation>
    <scope>NUCLEOTIDE SEQUENCE [LARGE SCALE GENOMIC DNA]</scope>
    <source>
        <strain>CDC 1551 / Oshkosh</strain>
    </source>
</reference>
<comment type="similarity">
    <text evidence="1">Belongs to the bacterial ribosomal protein bL34 family.</text>
</comment>
<organism>
    <name type="scientific">Mycobacterium tuberculosis (strain CDC 1551 / Oshkosh)</name>
    <dbReference type="NCBI Taxonomy" id="83331"/>
    <lineage>
        <taxon>Bacteria</taxon>
        <taxon>Bacillati</taxon>
        <taxon>Actinomycetota</taxon>
        <taxon>Actinomycetes</taxon>
        <taxon>Mycobacteriales</taxon>
        <taxon>Mycobacteriaceae</taxon>
        <taxon>Mycobacterium</taxon>
        <taxon>Mycobacterium tuberculosis complex</taxon>
    </lineage>
</organism>
<feature type="chain" id="PRO_0000428227" description="Large ribosomal subunit protein bL34">
    <location>
        <begin position="1"/>
        <end position="47"/>
    </location>
</feature>
<name>RL34_MYCTO</name>
<gene>
    <name type="primary">rpmH</name>
    <name type="ordered locus">MT4041.1</name>
</gene>
<keyword id="KW-1185">Reference proteome</keyword>
<keyword id="KW-0687">Ribonucleoprotein</keyword>
<keyword id="KW-0689">Ribosomal protein</keyword>
<protein>
    <recommendedName>
        <fullName evidence="1">Large ribosomal subunit protein bL34</fullName>
    </recommendedName>
    <alternativeName>
        <fullName>50S ribosomal protein L34</fullName>
    </alternativeName>
</protein>
<accession>P9WH92</accession>
<accession>L0TDY5</accession>
<accession>P0A5W4</accession>
<accession>P52829</accession>
<evidence type="ECO:0000305" key="1"/>
<sequence>MTKGKRTFQPNNRRRARVHGFRLRMRTRAGRSIVSSRRRKGRRTLSA</sequence>
<proteinExistence type="inferred from homology"/>
<dbReference type="EMBL" id="AE000516">
    <property type="protein sequence ID" value="AAK48409.1"/>
    <property type="molecule type" value="Genomic_DNA"/>
</dbReference>
<dbReference type="PIR" id="S70981">
    <property type="entry name" value="S70981"/>
</dbReference>
<dbReference type="RefSeq" id="WP_003400206.1">
    <property type="nucleotide sequence ID" value="NZ_KK341228.1"/>
</dbReference>
<dbReference type="SMR" id="P9WH92"/>
<dbReference type="GeneID" id="45427924"/>
<dbReference type="KEGG" id="mtc:MT4041.1"/>
<dbReference type="HOGENOM" id="CLU_129938_2_1_11"/>
<dbReference type="Proteomes" id="UP000001020">
    <property type="component" value="Chromosome"/>
</dbReference>
<dbReference type="GO" id="GO:1990904">
    <property type="term" value="C:ribonucleoprotein complex"/>
    <property type="evidence" value="ECO:0007669"/>
    <property type="project" value="UniProtKB-KW"/>
</dbReference>
<dbReference type="GO" id="GO:0005840">
    <property type="term" value="C:ribosome"/>
    <property type="evidence" value="ECO:0007669"/>
    <property type="project" value="UniProtKB-KW"/>
</dbReference>
<dbReference type="GO" id="GO:0003735">
    <property type="term" value="F:structural constituent of ribosome"/>
    <property type="evidence" value="ECO:0007669"/>
    <property type="project" value="InterPro"/>
</dbReference>
<dbReference type="GO" id="GO:0006412">
    <property type="term" value="P:translation"/>
    <property type="evidence" value="ECO:0007669"/>
    <property type="project" value="UniProtKB-UniRule"/>
</dbReference>
<dbReference type="FunFam" id="1.10.287.3980:FF:000001">
    <property type="entry name" value="Mitochondrial ribosomal protein L34"/>
    <property type="match status" value="1"/>
</dbReference>
<dbReference type="Gene3D" id="1.10.287.3980">
    <property type="match status" value="1"/>
</dbReference>
<dbReference type="HAMAP" id="MF_00391">
    <property type="entry name" value="Ribosomal_bL34"/>
    <property type="match status" value="1"/>
</dbReference>
<dbReference type="InterPro" id="IPR000271">
    <property type="entry name" value="Ribosomal_bL34"/>
</dbReference>
<dbReference type="InterPro" id="IPR020939">
    <property type="entry name" value="Ribosomal_bL34_CS"/>
</dbReference>
<dbReference type="NCBIfam" id="TIGR01030">
    <property type="entry name" value="rpmH_bact"/>
    <property type="match status" value="1"/>
</dbReference>
<dbReference type="PANTHER" id="PTHR14503:SF4">
    <property type="entry name" value="LARGE RIBOSOMAL SUBUNIT PROTEIN BL34M"/>
    <property type="match status" value="1"/>
</dbReference>
<dbReference type="PANTHER" id="PTHR14503">
    <property type="entry name" value="MITOCHONDRIAL RIBOSOMAL PROTEIN 34 FAMILY MEMBER"/>
    <property type="match status" value="1"/>
</dbReference>
<dbReference type="Pfam" id="PF00468">
    <property type="entry name" value="Ribosomal_L34"/>
    <property type="match status" value="1"/>
</dbReference>
<dbReference type="PROSITE" id="PS00784">
    <property type="entry name" value="RIBOSOMAL_L34"/>
    <property type="match status" value="1"/>
</dbReference>